<comment type="function">
    <text evidence="1">Catalyzes the conversion of 1-hydroxy-2-methyl-2-(E)-butenyl 4-diphosphate (HMBPP) into a mixture of isopentenyl diphosphate (IPP) and dimethylallyl diphosphate (DMAPP). Acts in the terminal step of the DOXP/MEP pathway for isoprenoid precursor biosynthesis.</text>
</comment>
<comment type="catalytic activity">
    <reaction evidence="1">
        <text>isopentenyl diphosphate + 2 oxidized [2Fe-2S]-[ferredoxin] + H2O = (2E)-4-hydroxy-3-methylbut-2-enyl diphosphate + 2 reduced [2Fe-2S]-[ferredoxin] + 2 H(+)</text>
        <dbReference type="Rhea" id="RHEA:24488"/>
        <dbReference type="Rhea" id="RHEA-COMP:10000"/>
        <dbReference type="Rhea" id="RHEA-COMP:10001"/>
        <dbReference type="ChEBI" id="CHEBI:15377"/>
        <dbReference type="ChEBI" id="CHEBI:15378"/>
        <dbReference type="ChEBI" id="CHEBI:33737"/>
        <dbReference type="ChEBI" id="CHEBI:33738"/>
        <dbReference type="ChEBI" id="CHEBI:128753"/>
        <dbReference type="ChEBI" id="CHEBI:128769"/>
        <dbReference type="EC" id="1.17.7.4"/>
    </reaction>
</comment>
<comment type="catalytic activity">
    <reaction evidence="1">
        <text>dimethylallyl diphosphate + 2 oxidized [2Fe-2S]-[ferredoxin] + H2O = (2E)-4-hydroxy-3-methylbut-2-enyl diphosphate + 2 reduced [2Fe-2S]-[ferredoxin] + 2 H(+)</text>
        <dbReference type="Rhea" id="RHEA:24825"/>
        <dbReference type="Rhea" id="RHEA-COMP:10000"/>
        <dbReference type="Rhea" id="RHEA-COMP:10001"/>
        <dbReference type="ChEBI" id="CHEBI:15377"/>
        <dbReference type="ChEBI" id="CHEBI:15378"/>
        <dbReference type="ChEBI" id="CHEBI:33737"/>
        <dbReference type="ChEBI" id="CHEBI:33738"/>
        <dbReference type="ChEBI" id="CHEBI:57623"/>
        <dbReference type="ChEBI" id="CHEBI:128753"/>
        <dbReference type="EC" id="1.17.7.4"/>
    </reaction>
</comment>
<comment type="cofactor">
    <cofactor evidence="1">
        <name>[4Fe-4S] cluster</name>
        <dbReference type="ChEBI" id="CHEBI:49883"/>
    </cofactor>
    <text evidence="1">Binds 1 [4Fe-4S] cluster per subunit.</text>
</comment>
<comment type="pathway">
    <text evidence="1">Isoprenoid biosynthesis; dimethylallyl diphosphate biosynthesis; dimethylallyl diphosphate from (2E)-4-hydroxy-3-methylbutenyl diphosphate: step 1/1.</text>
</comment>
<comment type="pathway">
    <text evidence="1">Isoprenoid biosynthesis; isopentenyl diphosphate biosynthesis via DXP pathway; isopentenyl diphosphate from 1-deoxy-D-xylulose 5-phosphate: step 6/6.</text>
</comment>
<comment type="similarity">
    <text evidence="1">Belongs to the IspH family.</text>
</comment>
<feature type="chain" id="PRO_1000203999" description="4-hydroxy-3-methylbut-2-enyl diphosphate reductase">
    <location>
        <begin position="1"/>
        <end position="315"/>
    </location>
</feature>
<feature type="active site" description="Proton donor" evidence="1">
    <location>
        <position position="126"/>
    </location>
</feature>
<feature type="binding site" evidence="1">
    <location>
        <position position="12"/>
    </location>
    <ligand>
        <name>[4Fe-4S] cluster</name>
        <dbReference type="ChEBI" id="CHEBI:49883"/>
    </ligand>
</feature>
<feature type="binding site" evidence="1">
    <location>
        <position position="41"/>
    </location>
    <ligand>
        <name>(2E)-4-hydroxy-3-methylbut-2-enyl diphosphate</name>
        <dbReference type="ChEBI" id="CHEBI:128753"/>
    </ligand>
</feature>
<feature type="binding site" evidence="1">
    <location>
        <position position="41"/>
    </location>
    <ligand>
        <name>dimethylallyl diphosphate</name>
        <dbReference type="ChEBI" id="CHEBI:57623"/>
    </ligand>
</feature>
<feature type="binding site" evidence="1">
    <location>
        <position position="41"/>
    </location>
    <ligand>
        <name>isopentenyl diphosphate</name>
        <dbReference type="ChEBI" id="CHEBI:128769"/>
    </ligand>
</feature>
<feature type="binding site" evidence="1">
    <location>
        <position position="74"/>
    </location>
    <ligand>
        <name>(2E)-4-hydroxy-3-methylbut-2-enyl diphosphate</name>
        <dbReference type="ChEBI" id="CHEBI:128753"/>
    </ligand>
</feature>
<feature type="binding site" evidence="1">
    <location>
        <position position="74"/>
    </location>
    <ligand>
        <name>dimethylallyl diphosphate</name>
        <dbReference type="ChEBI" id="CHEBI:57623"/>
    </ligand>
</feature>
<feature type="binding site" evidence="1">
    <location>
        <position position="74"/>
    </location>
    <ligand>
        <name>isopentenyl diphosphate</name>
        <dbReference type="ChEBI" id="CHEBI:128769"/>
    </ligand>
</feature>
<feature type="binding site" evidence="1">
    <location>
        <position position="96"/>
    </location>
    <ligand>
        <name>[4Fe-4S] cluster</name>
        <dbReference type="ChEBI" id="CHEBI:49883"/>
    </ligand>
</feature>
<feature type="binding site" evidence="1">
    <location>
        <position position="124"/>
    </location>
    <ligand>
        <name>(2E)-4-hydroxy-3-methylbut-2-enyl diphosphate</name>
        <dbReference type="ChEBI" id="CHEBI:128753"/>
    </ligand>
</feature>
<feature type="binding site" evidence="1">
    <location>
        <position position="124"/>
    </location>
    <ligand>
        <name>dimethylallyl diphosphate</name>
        <dbReference type="ChEBI" id="CHEBI:57623"/>
    </ligand>
</feature>
<feature type="binding site" evidence="1">
    <location>
        <position position="124"/>
    </location>
    <ligand>
        <name>isopentenyl diphosphate</name>
        <dbReference type="ChEBI" id="CHEBI:128769"/>
    </ligand>
</feature>
<feature type="binding site" evidence="1">
    <location>
        <position position="168"/>
    </location>
    <ligand>
        <name>(2E)-4-hydroxy-3-methylbut-2-enyl diphosphate</name>
        <dbReference type="ChEBI" id="CHEBI:128753"/>
    </ligand>
</feature>
<feature type="binding site" evidence="1">
    <location>
        <position position="198"/>
    </location>
    <ligand>
        <name>[4Fe-4S] cluster</name>
        <dbReference type="ChEBI" id="CHEBI:49883"/>
    </ligand>
</feature>
<feature type="binding site" evidence="1">
    <location>
        <position position="226"/>
    </location>
    <ligand>
        <name>(2E)-4-hydroxy-3-methylbut-2-enyl diphosphate</name>
        <dbReference type="ChEBI" id="CHEBI:128753"/>
    </ligand>
</feature>
<feature type="binding site" evidence="1">
    <location>
        <position position="226"/>
    </location>
    <ligand>
        <name>dimethylallyl diphosphate</name>
        <dbReference type="ChEBI" id="CHEBI:57623"/>
    </ligand>
</feature>
<feature type="binding site" evidence="1">
    <location>
        <position position="226"/>
    </location>
    <ligand>
        <name>isopentenyl diphosphate</name>
        <dbReference type="ChEBI" id="CHEBI:128769"/>
    </ligand>
</feature>
<feature type="binding site" evidence="1">
    <location>
        <position position="227"/>
    </location>
    <ligand>
        <name>(2E)-4-hydroxy-3-methylbut-2-enyl diphosphate</name>
        <dbReference type="ChEBI" id="CHEBI:128753"/>
    </ligand>
</feature>
<feature type="binding site" evidence="1">
    <location>
        <position position="227"/>
    </location>
    <ligand>
        <name>dimethylallyl diphosphate</name>
        <dbReference type="ChEBI" id="CHEBI:57623"/>
    </ligand>
</feature>
<feature type="binding site" evidence="1">
    <location>
        <position position="227"/>
    </location>
    <ligand>
        <name>isopentenyl diphosphate</name>
        <dbReference type="ChEBI" id="CHEBI:128769"/>
    </ligand>
</feature>
<feature type="binding site" evidence="1">
    <location>
        <position position="228"/>
    </location>
    <ligand>
        <name>(2E)-4-hydroxy-3-methylbut-2-enyl diphosphate</name>
        <dbReference type="ChEBI" id="CHEBI:128753"/>
    </ligand>
</feature>
<feature type="binding site" evidence="1">
    <location>
        <position position="228"/>
    </location>
    <ligand>
        <name>dimethylallyl diphosphate</name>
        <dbReference type="ChEBI" id="CHEBI:57623"/>
    </ligand>
</feature>
<feature type="binding site" evidence="1">
    <location>
        <position position="228"/>
    </location>
    <ligand>
        <name>isopentenyl diphosphate</name>
        <dbReference type="ChEBI" id="CHEBI:128769"/>
    </ligand>
</feature>
<feature type="binding site" evidence="1">
    <location>
        <position position="270"/>
    </location>
    <ligand>
        <name>(2E)-4-hydroxy-3-methylbut-2-enyl diphosphate</name>
        <dbReference type="ChEBI" id="CHEBI:128753"/>
    </ligand>
</feature>
<feature type="binding site" evidence="1">
    <location>
        <position position="270"/>
    </location>
    <ligand>
        <name>dimethylallyl diphosphate</name>
        <dbReference type="ChEBI" id="CHEBI:57623"/>
    </ligand>
</feature>
<feature type="binding site" evidence="1">
    <location>
        <position position="270"/>
    </location>
    <ligand>
        <name>isopentenyl diphosphate</name>
        <dbReference type="ChEBI" id="CHEBI:128769"/>
    </ligand>
</feature>
<reference key="1">
    <citation type="journal article" date="2009" name="J. Bacteriol.">
        <title>Genome sequence of Azotobacter vinelandii, an obligate aerobe specialized to support diverse anaerobic metabolic processes.</title>
        <authorList>
            <person name="Setubal J.C."/>
            <person name="Dos Santos P."/>
            <person name="Goldman B.S."/>
            <person name="Ertesvaag H."/>
            <person name="Espin G."/>
            <person name="Rubio L.M."/>
            <person name="Valla S."/>
            <person name="Almeida N.F."/>
            <person name="Balasubramanian D."/>
            <person name="Cromes L."/>
            <person name="Curatti L."/>
            <person name="Du Z."/>
            <person name="Godsy E."/>
            <person name="Goodner B."/>
            <person name="Hellner-Burris K."/>
            <person name="Hernandez J.A."/>
            <person name="Houmiel K."/>
            <person name="Imperial J."/>
            <person name="Kennedy C."/>
            <person name="Larson T.J."/>
            <person name="Latreille P."/>
            <person name="Ligon L.S."/>
            <person name="Lu J."/>
            <person name="Maerk M."/>
            <person name="Miller N.M."/>
            <person name="Norton S."/>
            <person name="O'Carroll I.P."/>
            <person name="Paulsen I."/>
            <person name="Raulfs E.C."/>
            <person name="Roemer R."/>
            <person name="Rosser J."/>
            <person name="Segura D."/>
            <person name="Slater S."/>
            <person name="Stricklin S.L."/>
            <person name="Studholme D.J."/>
            <person name="Sun J."/>
            <person name="Viana C.J."/>
            <person name="Wallin E."/>
            <person name="Wang B."/>
            <person name="Wheeler C."/>
            <person name="Zhu H."/>
            <person name="Dean D.R."/>
            <person name="Dixon R."/>
            <person name="Wood D."/>
        </authorList>
    </citation>
    <scope>NUCLEOTIDE SEQUENCE [LARGE SCALE GENOMIC DNA]</scope>
    <source>
        <strain>DJ / ATCC BAA-1303</strain>
    </source>
</reference>
<proteinExistence type="inferred from homology"/>
<sequence length="315" mass="34797">MHIKLANPRGFCAGVDRAIEIVNRALEVFGPPIYVRHEVVHNKFVVDDLRSRGAIFVEELDQVPDNVIVIFSAHGVSQAVRQEAARRGLKVFDATCPLVTKVHMEVARYSREGRECILIGHQGHPEVVGTMGQYDTANGGAIYLVEDEEDVARLQVRNPVSLAFVTQTTLSMDDAARMIDALRARFPGIGGPRRDDICYATQNRQDAVRQLAGECQLVLVVGSSSSSNSNRLRELAESIGVPAYLVDGAQDLRREWFDGIRRVGVTAGASAPEVLVRDVIDRLRQWGVVNVEELTGREENITFSIPKELRVVSSD</sequence>
<gene>
    <name evidence="1" type="primary">ispH</name>
    <name type="ordered locus">Avin_11810</name>
</gene>
<dbReference type="EC" id="1.17.7.4" evidence="1"/>
<dbReference type="EMBL" id="CP001157">
    <property type="protein sequence ID" value="ACO77410.1"/>
    <property type="molecule type" value="Genomic_DNA"/>
</dbReference>
<dbReference type="RefSeq" id="WP_012699830.1">
    <property type="nucleotide sequence ID" value="NC_012560.1"/>
</dbReference>
<dbReference type="SMR" id="C1DPH8"/>
<dbReference type="STRING" id="322710.Avin_11810"/>
<dbReference type="EnsemblBacteria" id="ACO77410">
    <property type="protein sequence ID" value="ACO77410"/>
    <property type="gene ID" value="Avin_11810"/>
</dbReference>
<dbReference type="GeneID" id="88184506"/>
<dbReference type="KEGG" id="avn:Avin_11810"/>
<dbReference type="eggNOG" id="COG0761">
    <property type="taxonomic scope" value="Bacteria"/>
</dbReference>
<dbReference type="HOGENOM" id="CLU_027486_1_0_6"/>
<dbReference type="OrthoDB" id="9804068at2"/>
<dbReference type="UniPathway" id="UPA00056">
    <property type="reaction ID" value="UER00097"/>
</dbReference>
<dbReference type="UniPathway" id="UPA00059">
    <property type="reaction ID" value="UER00105"/>
</dbReference>
<dbReference type="Proteomes" id="UP000002424">
    <property type="component" value="Chromosome"/>
</dbReference>
<dbReference type="GO" id="GO:0051539">
    <property type="term" value="F:4 iron, 4 sulfur cluster binding"/>
    <property type="evidence" value="ECO:0007669"/>
    <property type="project" value="UniProtKB-UniRule"/>
</dbReference>
<dbReference type="GO" id="GO:0051745">
    <property type="term" value="F:4-hydroxy-3-methylbut-2-enyl diphosphate reductase activity"/>
    <property type="evidence" value="ECO:0007669"/>
    <property type="project" value="UniProtKB-UniRule"/>
</dbReference>
<dbReference type="GO" id="GO:0046872">
    <property type="term" value="F:metal ion binding"/>
    <property type="evidence" value="ECO:0007669"/>
    <property type="project" value="UniProtKB-KW"/>
</dbReference>
<dbReference type="GO" id="GO:0050992">
    <property type="term" value="P:dimethylallyl diphosphate biosynthetic process"/>
    <property type="evidence" value="ECO:0007669"/>
    <property type="project" value="UniProtKB-UniRule"/>
</dbReference>
<dbReference type="GO" id="GO:0019288">
    <property type="term" value="P:isopentenyl diphosphate biosynthetic process, methylerythritol 4-phosphate pathway"/>
    <property type="evidence" value="ECO:0007669"/>
    <property type="project" value="UniProtKB-UniRule"/>
</dbReference>
<dbReference type="GO" id="GO:0016114">
    <property type="term" value="P:terpenoid biosynthetic process"/>
    <property type="evidence" value="ECO:0007669"/>
    <property type="project" value="UniProtKB-UniRule"/>
</dbReference>
<dbReference type="CDD" id="cd13944">
    <property type="entry name" value="lytB_ispH"/>
    <property type="match status" value="1"/>
</dbReference>
<dbReference type="Gene3D" id="3.40.50.11270">
    <property type="match status" value="1"/>
</dbReference>
<dbReference type="Gene3D" id="3.40.1010.20">
    <property type="entry name" value="4-hydroxy-3-methylbut-2-enyl diphosphate reductase, catalytic domain"/>
    <property type="match status" value="2"/>
</dbReference>
<dbReference type="HAMAP" id="MF_00191">
    <property type="entry name" value="IspH"/>
    <property type="match status" value="1"/>
</dbReference>
<dbReference type="InterPro" id="IPR003451">
    <property type="entry name" value="LytB/IspH"/>
</dbReference>
<dbReference type="NCBIfam" id="TIGR00216">
    <property type="entry name" value="ispH_lytB"/>
    <property type="match status" value="1"/>
</dbReference>
<dbReference type="NCBIfam" id="NF002188">
    <property type="entry name" value="PRK01045.1-2"/>
    <property type="match status" value="1"/>
</dbReference>
<dbReference type="NCBIfam" id="NF002190">
    <property type="entry name" value="PRK01045.1-4"/>
    <property type="match status" value="1"/>
</dbReference>
<dbReference type="PANTHER" id="PTHR30426">
    <property type="entry name" value="4-HYDROXY-3-METHYLBUT-2-ENYL DIPHOSPHATE REDUCTASE"/>
    <property type="match status" value="1"/>
</dbReference>
<dbReference type="PANTHER" id="PTHR30426:SF0">
    <property type="entry name" value="4-HYDROXY-3-METHYLBUT-2-ENYL DIPHOSPHATE REDUCTASE"/>
    <property type="match status" value="1"/>
</dbReference>
<dbReference type="Pfam" id="PF02401">
    <property type="entry name" value="LYTB"/>
    <property type="match status" value="1"/>
</dbReference>
<evidence type="ECO:0000255" key="1">
    <source>
        <dbReference type="HAMAP-Rule" id="MF_00191"/>
    </source>
</evidence>
<accession>C1DPH8</accession>
<organism>
    <name type="scientific">Azotobacter vinelandii (strain DJ / ATCC BAA-1303)</name>
    <dbReference type="NCBI Taxonomy" id="322710"/>
    <lineage>
        <taxon>Bacteria</taxon>
        <taxon>Pseudomonadati</taxon>
        <taxon>Pseudomonadota</taxon>
        <taxon>Gammaproteobacteria</taxon>
        <taxon>Pseudomonadales</taxon>
        <taxon>Pseudomonadaceae</taxon>
        <taxon>Azotobacter</taxon>
    </lineage>
</organism>
<protein>
    <recommendedName>
        <fullName evidence="1">4-hydroxy-3-methylbut-2-enyl diphosphate reductase</fullName>
        <shortName evidence="1">HMBPP reductase</shortName>
        <ecNumber evidence="1">1.17.7.4</ecNumber>
    </recommendedName>
</protein>
<keyword id="KW-0004">4Fe-4S</keyword>
<keyword id="KW-0408">Iron</keyword>
<keyword id="KW-0411">Iron-sulfur</keyword>
<keyword id="KW-0414">Isoprene biosynthesis</keyword>
<keyword id="KW-0479">Metal-binding</keyword>
<keyword id="KW-0560">Oxidoreductase</keyword>
<name>ISPH_AZOVD</name>